<protein>
    <recommendedName>
        <fullName>Poly(3-hydroxyalkanoate) polymerase 1</fullName>
        <shortName evidence="4">PHA polymerase 1</shortName>
        <ecNumber>2.3.1.-</ecNumber>
    </recommendedName>
    <alternativeName>
        <fullName evidence="4">ORF1</fullName>
    </alternativeName>
    <alternativeName>
        <fullName>Polyhydroxyalkanoic acid synthase 1</fullName>
        <shortName>PHA synthase 1</shortName>
    </alternativeName>
</protein>
<gene>
    <name evidence="3" type="primary">phaC1</name>
    <name type="synonym">phaA</name>
</gene>
<accession>P26494</accession>
<comment type="function">
    <text evidence="2">Synthesizes poly(3-hydroxyalkanoates) (PHA), complements a mutant of P.putida that does not make PHA.</text>
</comment>
<comment type="pathway">
    <text>Biopolymer metabolism; poly-(R)-3-hydroxybutanoate biosynthesis.</text>
</comment>
<comment type="miscellaneous">
    <text evidence="6">P.oleovorans accumulates poly(3-hydroxyalkanoates) after growth on medium chain length hydrocarbons. Large amounts of this polyester are synthesized when cells are grown under nitrogen-limiting conditions. When nitrogen is resupplied in the medium, the accumulated PHA is degraded.</text>
</comment>
<comment type="similarity">
    <text evidence="5">Belongs to the PHA/PHB synthase family. Type II PhaC subfamily.</text>
</comment>
<feature type="chain" id="PRO_0000215465" description="Poly(3-hydroxyalkanoate) polymerase 1">
    <location>
        <begin position="1"/>
        <end position="559"/>
    </location>
</feature>
<feature type="active site" evidence="1">
    <location>
        <position position="296"/>
    </location>
</feature>
<keyword id="KW-0012">Acyltransferase</keyword>
<keyword id="KW-0577">PHA biosynthesis</keyword>
<keyword id="KW-0583">PHB biosynthesis</keyword>
<keyword id="KW-0808">Transferase</keyword>
<sequence>MSNKNNDELQRQASENTLGLNPVIGIRRKDLLSSARTVLRQAVRQPLHSAKHVAHFGLELKNVLLGKSSLAPESDDRRFNDPAWSNNPLYRRYLQTYLAWRKELQDWIGNSDLSPQDISRGQFVINLMTEAMAPTNTLSNPAAVKRFFETGGKSLLDGLSNLAKDLVNNGGMPSQVNMDAFEVGKNLGTSEGAVVYRNDVLELIQYKPITEQVHARPLLVVPPQINKFYVFDLSPEKSLARYCLRSQQQTFIISWRNPTKAQREWGLSTYIDALKEAVDAVLAITGSKDLNMLGACSGGITCTALVGHYAALGENKVNALTLLVSVLDTTMDNQVALFVDEQTLEAAKRHSYQAGVLEGSEMAKVFAWMRPNDLIWNYWVNNYLLGNEPPVFDILFWNNDTTRLPAAFHGDLIEMFKSNPLTRPDALEVCGTPIDLKQVKCDIYSLAGTNDHITPWQSCYRSAHLFGGKIEFVLSNSGHIQSILNPPGNPKARFMTGADRPGDPVAWQENATKHADSWWLHWQSWLGERAGELEKAPTRLGNRAYAAGEASPGTYVHER</sequence>
<organism>
    <name type="scientific">Ectopseudomonas oleovorans</name>
    <name type="common">Pseudomonas oleovorans</name>
    <dbReference type="NCBI Taxonomy" id="301"/>
    <lineage>
        <taxon>Bacteria</taxon>
        <taxon>Pseudomonadati</taxon>
        <taxon>Pseudomonadota</taxon>
        <taxon>Gammaproteobacteria</taxon>
        <taxon>Pseudomonadales</taxon>
        <taxon>Pseudomonadaceae</taxon>
        <taxon>Ectopseudomonas</taxon>
    </lineage>
</organism>
<reference key="1">
    <citation type="journal article" date="1991" name="J. Biol. Chem.">
        <title>Metabolism of poly(3-hydroxyalkanoates) (PHAs) by Pseudomonas oleovorans. Identification and sequences of genes and function of the encoded proteins in the synthesis and degradation of PHA.</title>
        <authorList>
            <person name="Huisman G.W."/>
            <person name="Wonink E."/>
            <person name="Meima R."/>
            <person name="Kazemier B."/>
            <person name="Terpstra P."/>
            <person name="Witholt B."/>
        </authorList>
    </citation>
    <scope>NUCLEOTIDE SEQUENCE [GENOMIC DNA]</scope>
    <scope>FUNCTION</scope>
    <source>
        <strain>GPo1</strain>
    </source>
</reference>
<reference key="2">
    <citation type="journal article" date="1992" name="FEMS Microbiol. Rev.">
        <title>Molecular basis for biosynthesis and accumulation of polyhydroxyalkanoic acids in bacteria.</title>
        <authorList>
            <person name="Steinbuechel A."/>
            <person name="Hustede E."/>
            <person name="Liebergesell M."/>
            <person name="Pieper U."/>
            <person name="Timm A."/>
            <person name="Valentin H."/>
        </authorList>
    </citation>
    <scope>GENE NAME</scope>
</reference>
<proteinExistence type="inferred from homology"/>
<name>PHAC1_ECTOL</name>
<evidence type="ECO:0000255" key="1"/>
<evidence type="ECO:0000269" key="2">
    <source>
    </source>
</evidence>
<evidence type="ECO:0000303" key="3">
    <source>
    </source>
</evidence>
<evidence type="ECO:0000303" key="4">
    <source>
    </source>
</evidence>
<evidence type="ECO:0000305" key="5"/>
<evidence type="ECO:0000305" key="6">
    <source>
    </source>
</evidence>
<dbReference type="EC" id="2.3.1.-"/>
<dbReference type="EMBL" id="M58445">
    <property type="protein sequence ID" value="AAA25932.1"/>
    <property type="molecule type" value="Genomic_DNA"/>
</dbReference>
<dbReference type="PIR" id="A38604">
    <property type="entry name" value="A38604"/>
</dbReference>
<dbReference type="SMR" id="P26494"/>
<dbReference type="STRING" id="301.SAMN05216280_1001144"/>
<dbReference type="ESTHER" id="pseol-phaa">
    <property type="family name" value="PHA_synth_II"/>
</dbReference>
<dbReference type="BRENDA" id="2.3.1.304">
    <property type="organism ID" value="5150"/>
</dbReference>
<dbReference type="UniPathway" id="UPA00917"/>
<dbReference type="GO" id="GO:0016746">
    <property type="term" value="F:acyltransferase activity"/>
    <property type="evidence" value="ECO:0007669"/>
    <property type="project" value="UniProtKB-KW"/>
</dbReference>
<dbReference type="GO" id="GO:0042621">
    <property type="term" value="P:poly(3-hydroxyalkanoate) biosynthetic process"/>
    <property type="evidence" value="ECO:0007669"/>
    <property type="project" value="UniProtKB-KW"/>
</dbReference>
<dbReference type="GO" id="GO:0042619">
    <property type="term" value="P:poly-hydroxybutyrate biosynthetic process"/>
    <property type="evidence" value="ECO:0007669"/>
    <property type="project" value="UniProtKB-KW"/>
</dbReference>
<dbReference type="Gene3D" id="3.40.50.1820">
    <property type="entry name" value="alpha/beta hydrolase"/>
    <property type="match status" value="1"/>
</dbReference>
<dbReference type="InterPro" id="IPR029058">
    <property type="entry name" value="AB_hydrolase_fold"/>
</dbReference>
<dbReference type="InterPro" id="IPR051321">
    <property type="entry name" value="PHA/PHB_synthase"/>
</dbReference>
<dbReference type="InterPro" id="IPR011287">
    <property type="entry name" value="PHA_synth_II"/>
</dbReference>
<dbReference type="InterPro" id="IPR010941">
    <property type="entry name" value="PhaC_N"/>
</dbReference>
<dbReference type="NCBIfam" id="TIGR01839">
    <property type="entry name" value="PHA_synth_II"/>
    <property type="match status" value="1"/>
</dbReference>
<dbReference type="PANTHER" id="PTHR36837">
    <property type="entry name" value="POLY(3-HYDROXYALKANOATE) POLYMERASE SUBUNIT PHAC"/>
    <property type="match status" value="1"/>
</dbReference>
<dbReference type="PANTHER" id="PTHR36837:SF5">
    <property type="entry name" value="POLY-3-HYDROXYBUTYRATE SYNTHASE"/>
    <property type="match status" value="1"/>
</dbReference>
<dbReference type="Pfam" id="PF07167">
    <property type="entry name" value="PhaC_N"/>
    <property type="match status" value="1"/>
</dbReference>
<dbReference type="SUPFAM" id="SSF53474">
    <property type="entry name" value="alpha/beta-Hydrolases"/>
    <property type="match status" value="1"/>
</dbReference>